<protein>
    <recommendedName>
        <fullName evidence="1">Tol-Pal system protein TolB</fullName>
    </recommendedName>
</protein>
<dbReference type="EMBL" id="CP000436">
    <property type="protein sequence ID" value="ABI24540.1"/>
    <property type="molecule type" value="Genomic_DNA"/>
</dbReference>
<dbReference type="SMR" id="Q0I1N1"/>
<dbReference type="KEGG" id="hso:HS_0262"/>
<dbReference type="eggNOG" id="COG0823">
    <property type="taxonomic scope" value="Bacteria"/>
</dbReference>
<dbReference type="HOGENOM" id="CLU_047123_0_0_6"/>
<dbReference type="GO" id="GO:0042597">
    <property type="term" value="C:periplasmic space"/>
    <property type="evidence" value="ECO:0007669"/>
    <property type="project" value="UniProtKB-SubCell"/>
</dbReference>
<dbReference type="GO" id="GO:0051301">
    <property type="term" value="P:cell division"/>
    <property type="evidence" value="ECO:0007669"/>
    <property type="project" value="UniProtKB-UniRule"/>
</dbReference>
<dbReference type="GO" id="GO:0017038">
    <property type="term" value="P:protein import"/>
    <property type="evidence" value="ECO:0007669"/>
    <property type="project" value="InterPro"/>
</dbReference>
<dbReference type="Gene3D" id="2.120.10.30">
    <property type="entry name" value="TolB, C-terminal domain"/>
    <property type="match status" value="1"/>
</dbReference>
<dbReference type="Gene3D" id="3.40.50.10070">
    <property type="entry name" value="TolB, N-terminal domain"/>
    <property type="match status" value="1"/>
</dbReference>
<dbReference type="HAMAP" id="MF_00671">
    <property type="entry name" value="TolB"/>
    <property type="match status" value="1"/>
</dbReference>
<dbReference type="InterPro" id="IPR011042">
    <property type="entry name" value="6-blade_b-propeller_TolB-like"/>
</dbReference>
<dbReference type="InterPro" id="IPR011659">
    <property type="entry name" value="PD40"/>
</dbReference>
<dbReference type="InterPro" id="IPR014167">
    <property type="entry name" value="Tol-Pal_TolB"/>
</dbReference>
<dbReference type="InterPro" id="IPR007195">
    <property type="entry name" value="TolB_N"/>
</dbReference>
<dbReference type="NCBIfam" id="TIGR02800">
    <property type="entry name" value="propeller_TolB"/>
    <property type="match status" value="1"/>
</dbReference>
<dbReference type="PANTHER" id="PTHR36842:SF1">
    <property type="entry name" value="PROTEIN TOLB"/>
    <property type="match status" value="1"/>
</dbReference>
<dbReference type="PANTHER" id="PTHR36842">
    <property type="entry name" value="PROTEIN TOLB HOMOLOG"/>
    <property type="match status" value="1"/>
</dbReference>
<dbReference type="Pfam" id="PF07676">
    <property type="entry name" value="PD40"/>
    <property type="match status" value="4"/>
</dbReference>
<dbReference type="Pfam" id="PF04052">
    <property type="entry name" value="TolB_N"/>
    <property type="match status" value="1"/>
</dbReference>
<dbReference type="SUPFAM" id="SSF52964">
    <property type="entry name" value="TolB, N-terminal domain"/>
    <property type="match status" value="1"/>
</dbReference>
<dbReference type="SUPFAM" id="SSF69304">
    <property type="entry name" value="Tricorn protease N-terminal domain"/>
    <property type="match status" value="1"/>
</dbReference>
<sequence length="434" mass="46412">MKFSAYLTTLFIVLFSLFIQTVQAESEVRIVIDEGVDSARPIAIIPFKWNGSDSMPIDVADIISADLRNSGKFNPIAVSKMPQKPTSASEVISDVWSSLGIDAVVVGQVTPNEKGYSIAYQLVDTIGASGNAGEVLSQNQYAVPKNAIRLGAHTISDEVFEKLTAIRGAFRTKIAYVVQKHGGSKPYQVRVADYDGHNQFIVYSSSQPLMSPAWSPDGSKLAYVSFENRKSQLIVHDLQSGARRVIAAFPGHNGAPAFSPDGSKIAFASSKDGVLNIYVMNLGNGTISQLTSGAGNNTEPSWSPDGQSIIFTSDRAGGPQIYQMDVFGNGISLVSAGRGYSGKISADGSILVMIYGDNIVKKDLATGVTEMLSSTFLDESPSISPNGIMIIYSSTQGLGKVLQLVSADGRFKARLPSSDGQIKFPAWSPYLNKN</sequence>
<organism>
    <name type="scientific">Histophilus somni (strain 129Pt)</name>
    <name type="common">Haemophilus somnus</name>
    <dbReference type="NCBI Taxonomy" id="205914"/>
    <lineage>
        <taxon>Bacteria</taxon>
        <taxon>Pseudomonadati</taxon>
        <taxon>Pseudomonadota</taxon>
        <taxon>Gammaproteobacteria</taxon>
        <taxon>Pasteurellales</taxon>
        <taxon>Pasteurellaceae</taxon>
        <taxon>Histophilus</taxon>
    </lineage>
</organism>
<proteinExistence type="inferred from homology"/>
<reference key="1">
    <citation type="journal article" date="2007" name="J. Bacteriol.">
        <title>Complete genome sequence of Haemophilus somnus (Histophilus somni) strain 129Pt and comparison to Haemophilus ducreyi 35000HP and Haemophilus influenzae Rd.</title>
        <authorList>
            <person name="Challacombe J.F."/>
            <person name="Duncan A.J."/>
            <person name="Brettin T.S."/>
            <person name="Bruce D."/>
            <person name="Chertkov O."/>
            <person name="Detter J.C."/>
            <person name="Han C.S."/>
            <person name="Misra M."/>
            <person name="Richardson P."/>
            <person name="Tapia R."/>
            <person name="Thayer N."/>
            <person name="Xie G."/>
            <person name="Inzana T.J."/>
        </authorList>
    </citation>
    <scope>NUCLEOTIDE SEQUENCE [LARGE SCALE GENOMIC DNA]</scope>
    <source>
        <strain>129Pt</strain>
    </source>
</reference>
<feature type="signal peptide" evidence="1">
    <location>
        <begin position="1"/>
        <end position="24"/>
    </location>
</feature>
<feature type="chain" id="PRO_1000072719" description="Tol-Pal system protein TolB" evidence="1">
    <location>
        <begin position="25"/>
        <end position="434"/>
    </location>
</feature>
<evidence type="ECO:0000255" key="1">
    <source>
        <dbReference type="HAMAP-Rule" id="MF_00671"/>
    </source>
</evidence>
<comment type="function">
    <text evidence="1">Part of the Tol-Pal system, which plays a role in outer membrane invagination during cell division and is important for maintaining outer membrane integrity.</text>
</comment>
<comment type="subunit">
    <text evidence="1">The Tol-Pal system is composed of five core proteins: the inner membrane proteins TolA, TolQ and TolR, the periplasmic protein TolB and the outer membrane protein Pal. They form a network linking the inner and outer membranes and the peptidoglycan layer.</text>
</comment>
<comment type="subcellular location">
    <subcellularLocation>
        <location evidence="1">Periplasm</location>
    </subcellularLocation>
</comment>
<comment type="similarity">
    <text evidence="1">Belongs to the TolB family.</text>
</comment>
<keyword id="KW-0131">Cell cycle</keyword>
<keyword id="KW-0132">Cell division</keyword>
<keyword id="KW-0574">Periplasm</keyword>
<keyword id="KW-0732">Signal</keyword>
<accession>Q0I1N1</accession>
<name>TOLB_HISS1</name>
<gene>
    <name evidence="1" type="primary">tolB</name>
    <name type="ordered locus">HS_0262</name>
</gene>